<protein>
    <recommendedName>
        <fullName evidence="1">Siroheme synthase</fullName>
    </recommendedName>
    <domain>
        <recommendedName>
            <fullName evidence="1">Uroporphyrinogen-III C-methyltransferase</fullName>
            <shortName evidence="1">Urogen III methylase</shortName>
            <ecNumber evidence="1">2.1.1.107</ecNumber>
        </recommendedName>
        <alternativeName>
            <fullName evidence="1">SUMT</fullName>
        </alternativeName>
        <alternativeName>
            <fullName evidence="1">Uroporphyrinogen III methylase</fullName>
            <shortName evidence="1">UROM</shortName>
        </alternativeName>
    </domain>
    <domain>
        <recommendedName>
            <fullName evidence="1">Precorrin-2 dehydrogenase</fullName>
            <ecNumber evidence="1">1.3.1.76</ecNumber>
        </recommendedName>
    </domain>
    <domain>
        <recommendedName>
            <fullName evidence="1">Sirohydrochlorin ferrochelatase</fullName>
            <ecNumber evidence="1">4.99.1.4</ecNumber>
        </recommendedName>
    </domain>
</protein>
<proteinExistence type="inferred from homology"/>
<gene>
    <name evidence="1" type="primary">cysG</name>
    <name type="ordered locus">Pput_1834</name>
</gene>
<sequence length="463" mass="49467">MDYLPLFHKLQGGRVLVVGGGEIALRKARLLADAGGVLRVVAPDVDGQLAALAREGGGEVLVRGYQAADLVGCRLVIAATDDPGLNAQVSADAQALSVPVNVVDAPALCTVIFPAIVDRSPLVIAVSSGGDAPVLARLIRAKLEAWIPSAYGELAGLAARFRHKVKSLYPDVNQRRGFWETVFQGPIAERQLAGQGAEAERLLQAMVDGAPVQQGGEVYLVGAGPGDPDLLTFRALRLMQQADVVLYDRLVAPAIIDMCRRDAERIYVGKRRADHSVPQDQINRLLVDLARQGKRVLRLKGGDPFIFGRGGEEIEELAEHGIPFQVVPGITAASGCSAYGGIPLTHRDYAQSVRFVTGHLKDGTSNLPWTDLVAPAQTLVFYMGLVGLPTICAELIRHGRAASTPAALVQQGTTRNQRVFTGTLADLPDLVAQHEVHAPTLVIVGEVVQLRDKLAWFEGSQNS</sequence>
<dbReference type="EC" id="2.1.1.107" evidence="1"/>
<dbReference type="EC" id="1.3.1.76" evidence="1"/>
<dbReference type="EC" id="4.99.1.4" evidence="1"/>
<dbReference type="EMBL" id="CP000712">
    <property type="protein sequence ID" value="ABQ77987.1"/>
    <property type="molecule type" value="Genomic_DNA"/>
</dbReference>
<dbReference type="SMR" id="A5W1H7"/>
<dbReference type="KEGG" id="ppf:Pput_1834"/>
<dbReference type="eggNOG" id="COG0007">
    <property type="taxonomic scope" value="Bacteria"/>
</dbReference>
<dbReference type="eggNOG" id="COG1648">
    <property type="taxonomic scope" value="Bacteria"/>
</dbReference>
<dbReference type="HOGENOM" id="CLU_011276_2_2_6"/>
<dbReference type="UniPathway" id="UPA00148">
    <property type="reaction ID" value="UER00211"/>
</dbReference>
<dbReference type="UniPathway" id="UPA00148">
    <property type="reaction ID" value="UER00222"/>
</dbReference>
<dbReference type="UniPathway" id="UPA00262">
    <property type="reaction ID" value="UER00211"/>
</dbReference>
<dbReference type="UniPathway" id="UPA00262">
    <property type="reaction ID" value="UER00222"/>
</dbReference>
<dbReference type="UniPathway" id="UPA00262">
    <property type="reaction ID" value="UER00376"/>
</dbReference>
<dbReference type="GO" id="GO:0051287">
    <property type="term" value="F:NAD binding"/>
    <property type="evidence" value="ECO:0007669"/>
    <property type="project" value="InterPro"/>
</dbReference>
<dbReference type="GO" id="GO:0043115">
    <property type="term" value="F:precorrin-2 dehydrogenase activity"/>
    <property type="evidence" value="ECO:0007669"/>
    <property type="project" value="UniProtKB-UniRule"/>
</dbReference>
<dbReference type="GO" id="GO:0051266">
    <property type="term" value="F:sirohydrochlorin ferrochelatase activity"/>
    <property type="evidence" value="ECO:0007669"/>
    <property type="project" value="UniProtKB-EC"/>
</dbReference>
<dbReference type="GO" id="GO:0004851">
    <property type="term" value="F:uroporphyrin-III C-methyltransferase activity"/>
    <property type="evidence" value="ECO:0007669"/>
    <property type="project" value="UniProtKB-UniRule"/>
</dbReference>
<dbReference type="GO" id="GO:0009236">
    <property type="term" value="P:cobalamin biosynthetic process"/>
    <property type="evidence" value="ECO:0007669"/>
    <property type="project" value="UniProtKB-UniRule"/>
</dbReference>
<dbReference type="GO" id="GO:0032259">
    <property type="term" value="P:methylation"/>
    <property type="evidence" value="ECO:0007669"/>
    <property type="project" value="UniProtKB-KW"/>
</dbReference>
<dbReference type="GO" id="GO:0019354">
    <property type="term" value="P:siroheme biosynthetic process"/>
    <property type="evidence" value="ECO:0007669"/>
    <property type="project" value="UniProtKB-UniRule"/>
</dbReference>
<dbReference type="CDD" id="cd11642">
    <property type="entry name" value="SUMT"/>
    <property type="match status" value="1"/>
</dbReference>
<dbReference type="FunFam" id="3.30.160.110:FF:000001">
    <property type="entry name" value="Siroheme synthase"/>
    <property type="match status" value="1"/>
</dbReference>
<dbReference type="FunFam" id="3.30.950.10:FF:000001">
    <property type="entry name" value="Siroheme synthase"/>
    <property type="match status" value="1"/>
</dbReference>
<dbReference type="FunFam" id="3.40.1010.10:FF:000001">
    <property type="entry name" value="Siroheme synthase"/>
    <property type="match status" value="1"/>
</dbReference>
<dbReference type="Gene3D" id="3.40.1010.10">
    <property type="entry name" value="Cobalt-precorrin-4 Transmethylase, Domain 1"/>
    <property type="match status" value="1"/>
</dbReference>
<dbReference type="Gene3D" id="3.30.950.10">
    <property type="entry name" value="Methyltransferase, Cobalt-precorrin-4 Transmethylase, Domain 2"/>
    <property type="match status" value="1"/>
</dbReference>
<dbReference type="Gene3D" id="3.40.50.720">
    <property type="entry name" value="NAD(P)-binding Rossmann-like Domain"/>
    <property type="match status" value="1"/>
</dbReference>
<dbReference type="Gene3D" id="1.10.8.210">
    <property type="entry name" value="Sirohaem synthase, dimerisation domain"/>
    <property type="match status" value="1"/>
</dbReference>
<dbReference type="Gene3D" id="3.30.160.110">
    <property type="entry name" value="Siroheme synthase, domain 2"/>
    <property type="match status" value="1"/>
</dbReference>
<dbReference type="HAMAP" id="MF_01646">
    <property type="entry name" value="Siroheme_synth"/>
    <property type="match status" value="1"/>
</dbReference>
<dbReference type="InterPro" id="IPR000878">
    <property type="entry name" value="4pyrrol_Mease"/>
</dbReference>
<dbReference type="InterPro" id="IPR035996">
    <property type="entry name" value="4pyrrol_Methylase_sf"/>
</dbReference>
<dbReference type="InterPro" id="IPR014777">
    <property type="entry name" value="4pyrrole_Mease_sub1"/>
</dbReference>
<dbReference type="InterPro" id="IPR014776">
    <property type="entry name" value="4pyrrole_Mease_sub2"/>
</dbReference>
<dbReference type="InterPro" id="IPR006366">
    <property type="entry name" value="CobA/CysG_C"/>
</dbReference>
<dbReference type="InterPro" id="IPR036291">
    <property type="entry name" value="NAD(P)-bd_dom_sf"/>
</dbReference>
<dbReference type="InterPro" id="IPR050161">
    <property type="entry name" value="Siro_Cobalamin_biosynth"/>
</dbReference>
<dbReference type="InterPro" id="IPR037115">
    <property type="entry name" value="Sirohaem_synt_dimer_dom_sf"/>
</dbReference>
<dbReference type="InterPro" id="IPR012409">
    <property type="entry name" value="Sirohaem_synth"/>
</dbReference>
<dbReference type="InterPro" id="IPR028281">
    <property type="entry name" value="Sirohaem_synthase_central"/>
</dbReference>
<dbReference type="InterPro" id="IPR019478">
    <property type="entry name" value="Sirohaem_synthase_dimer_dom"/>
</dbReference>
<dbReference type="InterPro" id="IPR006367">
    <property type="entry name" value="Sirohaem_synthase_N"/>
</dbReference>
<dbReference type="InterPro" id="IPR003043">
    <property type="entry name" value="Uropor_MeTrfase_CS"/>
</dbReference>
<dbReference type="NCBIfam" id="TIGR01469">
    <property type="entry name" value="cobA_cysG_Cterm"/>
    <property type="match status" value="1"/>
</dbReference>
<dbReference type="NCBIfam" id="TIGR01470">
    <property type="entry name" value="cysG_Nterm"/>
    <property type="match status" value="1"/>
</dbReference>
<dbReference type="NCBIfam" id="NF004790">
    <property type="entry name" value="PRK06136.1"/>
    <property type="match status" value="1"/>
</dbReference>
<dbReference type="NCBIfam" id="NF007922">
    <property type="entry name" value="PRK10637.1"/>
    <property type="match status" value="1"/>
</dbReference>
<dbReference type="PANTHER" id="PTHR45790:SF1">
    <property type="entry name" value="SIROHEME SYNTHASE"/>
    <property type="match status" value="1"/>
</dbReference>
<dbReference type="PANTHER" id="PTHR45790">
    <property type="entry name" value="SIROHEME SYNTHASE-RELATED"/>
    <property type="match status" value="1"/>
</dbReference>
<dbReference type="Pfam" id="PF10414">
    <property type="entry name" value="CysG_dimeriser"/>
    <property type="match status" value="1"/>
</dbReference>
<dbReference type="Pfam" id="PF13241">
    <property type="entry name" value="NAD_binding_7"/>
    <property type="match status" value="1"/>
</dbReference>
<dbReference type="Pfam" id="PF14824">
    <property type="entry name" value="Sirohm_synth_M"/>
    <property type="match status" value="1"/>
</dbReference>
<dbReference type="Pfam" id="PF00590">
    <property type="entry name" value="TP_methylase"/>
    <property type="match status" value="1"/>
</dbReference>
<dbReference type="PIRSF" id="PIRSF036426">
    <property type="entry name" value="Sirohaem_synth"/>
    <property type="match status" value="1"/>
</dbReference>
<dbReference type="SUPFAM" id="SSF51735">
    <property type="entry name" value="NAD(P)-binding Rossmann-fold domains"/>
    <property type="match status" value="1"/>
</dbReference>
<dbReference type="SUPFAM" id="SSF75615">
    <property type="entry name" value="Siroheme synthase middle domains-like"/>
    <property type="match status" value="1"/>
</dbReference>
<dbReference type="SUPFAM" id="SSF53790">
    <property type="entry name" value="Tetrapyrrole methylase"/>
    <property type="match status" value="1"/>
</dbReference>
<dbReference type="PROSITE" id="PS00840">
    <property type="entry name" value="SUMT_2"/>
    <property type="match status" value="1"/>
</dbReference>
<accession>A5W1H7</accession>
<evidence type="ECO:0000255" key="1">
    <source>
        <dbReference type="HAMAP-Rule" id="MF_01646"/>
    </source>
</evidence>
<keyword id="KW-0169">Cobalamin biosynthesis</keyword>
<keyword id="KW-0456">Lyase</keyword>
<keyword id="KW-0489">Methyltransferase</keyword>
<keyword id="KW-0511">Multifunctional enzyme</keyword>
<keyword id="KW-0520">NAD</keyword>
<keyword id="KW-0560">Oxidoreductase</keyword>
<keyword id="KW-0597">Phosphoprotein</keyword>
<keyword id="KW-0627">Porphyrin biosynthesis</keyword>
<keyword id="KW-0949">S-adenosyl-L-methionine</keyword>
<keyword id="KW-0808">Transferase</keyword>
<feature type="chain" id="PRO_0000330540" description="Siroheme synthase">
    <location>
        <begin position="1"/>
        <end position="463"/>
    </location>
</feature>
<feature type="region of interest" description="Precorrin-2 dehydrogenase /sirohydrochlorin ferrochelatase" evidence="1">
    <location>
        <begin position="1"/>
        <end position="203"/>
    </location>
</feature>
<feature type="region of interest" description="Uroporphyrinogen-III C-methyltransferase" evidence="1">
    <location>
        <begin position="216"/>
        <end position="463"/>
    </location>
</feature>
<feature type="active site" description="Proton acceptor" evidence="1">
    <location>
        <position position="248"/>
    </location>
</feature>
<feature type="active site" description="Proton donor" evidence="1">
    <location>
        <position position="270"/>
    </location>
</feature>
<feature type="binding site" evidence="1">
    <location>
        <begin position="22"/>
        <end position="23"/>
    </location>
    <ligand>
        <name>NAD(+)</name>
        <dbReference type="ChEBI" id="CHEBI:57540"/>
    </ligand>
</feature>
<feature type="binding site" evidence="1">
    <location>
        <begin position="43"/>
        <end position="44"/>
    </location>
    <ligand>
        <name>NAD(+)</name>
        <dbReference type="ChEBI" id="CHEBI:57540"/>
    </ligand>
</feature>
<feature type="binding site" evidence="1">
    <location>
        <position position="225"/>
    </location>
    <ligand>
        <name>S-adenosyl-L-methionine</name>
        <dbReference type="ChEBI" id="CHEBI:59789"/>
    </ligand>
</feature>
<feature type="binding site" evidence="1">
    <location>
        <begin position="301"/>
        <end position="303"/>
    </location>
    <ligand>
        <name>S-adenosyl-L-methionine</name>
        <dbReference type="ChEBI" id="CHEBI:59789"/>
    </ligand>
</feature>
<feature type="binding site" evidence="1">
    <location>
        <position position="306"/>
    </location>
    <ligand>
        <name>S-adenosyl-L-methionine</name>
        <dbReference type="ChEBI" id="CHEBI:59789"/>
    </ligand>
</feature>
<feature type="binding site" evidence="1">
    <location>
        <begin position="331"/>
        <end position="332"/>
    </location>
    <ligand>
        <name>S-adenosyl-L-methionine</name>
        <dbReference type="ChEBI" id="CHEBI:59789"/>
    </ligand>
</feature>
<feature type="binding site" evidence="1">
    <location>
        <position position="383"/>
    </location>
    <ligand>
        <name>S-adenosyl-L-methionine</name>
        <dbReference type="ChEBI" id="CHEBI:59789"/>
    </ligand>
</feature>
<feature type="binding site" evidence="1">
    <location>
        <position position="412"/>
    </location>
    <ligand>
        <name>S-adenosyl-L-methionine</name>
        <dbReference type="ChEBI" id="CHEBI:59789"/>
    </ligand>
</feature>
<feature type="modified residue" description="Phosphoserine" evidence="1">
    <location>
        <position position="128"/>
    </location>
</feature>
<organism>
    <name type="scientific">Pseudomonas putida (strain ATCC 700007 / DSM 6899 / JCM 31910 / BCRC 17059 / LMG 24140 / F1)</name>
    <dbReference type="NCBI Taxonomy" id="351746"/>
    <lineage>
        <taxon>Bacteria</taxon>
        <taxon>Pseudomonadati</taxon>
        <taxon>Pseudomonadota</taxon>
        <taxon>Gammaproteobacteria</taxon>
        <taxon>Pseudomonadales</taxon>
        <taxon>Pseudomonadaceae</taxon>
        <taxon>Pseudomonas</taxon>
    </lineage>
</organism>
<name>CYSG_PSEP1</name>
<comment type="function">
    <text evidence="1">Multifunctional enzyme that catalyzes the SAM-dependent methylations of uroporphyrinogen III at position C-2 and C-7 to form precorrin-2 via precorrin-1. Then it catalyzes the NAD-dependent ring dehydrogenation of precorrin-2 to yield sirohydrochlorin. Finally, it catalyzes the ferrochelation of sirohydrochlorin to yield siroheme.</text>
</comment>
<comment type="catalytic activity">
    <reaction evidence="1">
        <text>uroporphyrinogen III + 2 S-adenosyl-L-methionine = precorrin-2 + 2 S-adenosyl-L-homocysteine + H(+)</text>
        <dbReference type="Rhea" id="RHEA:32459"/>
        <dbReference type="ChEBI" id="CHEBI:15378"/>
        <dbReference type="ChEBI" id="CHEBI:57308"/>
        <dbReference type="ChEBI" id="CHEBI:57856"/>
        <dbReference type="ChEBI" id="CHEBI:58827"/>
        <dbReference type="ChEBI" id="CHEBI:59789"/>
        <dbReference type="EC" id="2.1.1.107"/>
    </reaction>
</comment>
<comment type="catalytic activity">
    <reaction evidence="1">
        <text>precorrin-2 + NAD(+) = sirohydrochlorin + NADH + 2 H(+)</text>
        <dbReference type="Rhea" id="RHEA:15613"/>
        <dbReference type="ChEBI" id="CHEBI:15378"/>
        <dbReference type="ChEBI" id="CHEBI:57540"/>
        <dbReference type="ChEBI" id="CHEBI:57945"/>
        <dbReference type="ChEBI" id="CHEBI:58351"/>
        <dbReference type="ChEBI" id="CHEBI:58827"/>
        <dbReference type="EC" id="1.3.1.76"/>
    </reaction>
</comment>
<comment type="catalytic activity">
    <reaction evidence="1">
        <text>siroheme + 2 H(+) = sirohydrochlorin + Fe(2+)</text>
        <dbReference type="Rhea" id="RHEA:24360"/>
        <dbReference type="ChEBI" id="CHEBI:15378"/>
        <dbReference type="ChEBI" id="CHEBI:29033"/>
        <dbReference type="ChEBI" id="CHEBI:58351"/>
        <dbReference type="ChEBI" id="CHEBI:60052"/>
        <dbReference type="EC" id="4.99.1.4"/>
    </reaction>
</comment>
<comment type="pathway">
    <text evidence="1">Cofactor biosynthesis; adenosylcobalamin biosynthesis; precorrin-2 from uroporphyrinogen III: step 1/1.</text>
</comment>
<comment type="pathway">
    <text evidence="1">Cofactor biosynthesis; adenosylcobalamin biosynthesis; sirohydrochlorin from precorrin-2: step 1/1.</text>
</comment>
<comment type="pathway">
    <text evidence="1">Porphyrin-containing compound metabolism; siroheme biosynthesis; precorrin-2 from uroporphyrinogen III: step 1/1.</text>
</comment>
<comment type="pathway">
    <text evidence="1">Porphyrin-containing compound metabolism; siroheme biosynthesis; siroheme from sirohydrochlorin: step 1/1.</text>
</comment>
<comment type="pathway">
    <text evidence="1">Porphyrin-containing compound metabolism; siroheme biosynthesis; sirohydrochlorin from precorrin-2: step 1/1.</text>
</comment>
<comment type="similarity">
    <text evidence="1">In the N-terminal section; belongs to the precorrin-2 dehydrogenase / sirohydrochlorin ferrochelatase family.</text>
</comment>
<comment type="similarity">
    <text evidence="1">In the C-terminal section; belongs to the precorrin methyltransferase family.</text>
</comment>
<reference key="1">
    <citation type="submission" date="2007-05" db="EMBL/GenBank/DDBJ databases">
        <title>Complete sequence of Pseudomonas putida F1.</title>
        <authorList>
            <consortium name="US DOE Joint Genome Institute"/>
            <person name="Copeland A."/>
            <person name="Lucas S."/>
            <person name="Lapidus A."/>
            <person name="Barry K."/>
            <person name="Detter J.C."/>
            <person name="Glavina del Rio T."/>
            <person name="Hammon N."/>
            <person name="Israni S."/>
            <person name="Dalin E."/>
            <person name="Tice H."/>
            <person name="Pitluck S."/>
            <person name="Chain P."/>
            <person name="Malfatti S."/>
            <person name="Shin M."/>
            <person name="Vergez L."/>
            <person name="Schmutz J."/>
            <person name="Larimer F."/>
            <person name="Land M."/>
            <person name="Hauser L."/>
            <person name="Kyrpides N."/>
            <person name="Lykidis A."/>
            <person name="Parales R."/>
            <person name="Richardson P."/>
        </authorList>
    </citation>
    <scope>NUCLEOTIDE SEQUENCE [LARGE SCALE GENOMIC DNA]</scope>
    <source>
        <strain>ATCC 700007 / DSM 6899 / JCM 31910 / BCRC 17059 / LMG 24140 / F1</strain>
    </source>
</reference>